<sequence length="671" mass="73664">MESIEQQLTELRTTLRHHEYLYHVMDAPEIPDAEYDRLMRELRELETKHPELITPDSPTQRVGAAPLAAFSQIRHEVPMLSLDNVFDEESFLAFNKRVQDRLKNNEKVTWCCELKLDGLAVSILYENGVLVSAATRGDGTTGEDITSNVRTIRAIPLKLHGENIPARLEVRGEVFLPQAGFEKINEDARRTGGKVFANPRNAAAGSLRQLDPRITAKRPLTFFCYGVGVLEGGELPDTHLGRLLQFKKWGLPVSDRVTLCESAEEVLAFYHKVEEDRPTLGFDIDGVVIKVNSLEQQEQLGFVARAPRWAVAFKFPAQEQMTFVRDVEFQVGRTGAITPVARLEPVHVAGVLVSNATLHNADEIERLGLRIGDKVVIRRAGDVIPQVVNVVLSERPEDTREVVFPTHCPVCGSDVERVEGEAVARCTGGLICGAQRKESLKHFVSRRAMDVDGMGDKIIDQLVEKEYVHTPADLFKLTAGKLTGLERMGPKSAQNVVNALEKAKETTFARFLYALGIREVGEATAAGLAAYFGTLEALEAASIEELQKVPDVGIVVASHVHNFFAEESNRNVISELLAEGVHWPAPIVINAEEIDSPFAGKTVVLTGSLSQMSRDDAKARLVELGAKVAGSVSKKTDLVIAGEAAGSKLAKAQELGIEVIDEAEMLRLLGS</sequence>
<gene>
    <name evidence="1" type="primary">ligA</name>
    <name type="ordered locus">ECSE_2702</name>
</gene>
<keyword id="KW-0227">DNA damage</keyword>
<keyword id="KW-0234">DNA repair</keyword>
<keyword id="KW-0235">DNA replication</keyword>
<keyword id="KW-0436">Ligase</keyword>
<keyword id="KW-0460">Magnesium</keyword>
<keyword id="KW-0464">Manganese</keyword>
<keyword id="KW-0479">Metal-binding</keyword>
<keyword id="KW-0520">NAD</keyword>
<keyword id="KW-0862">Zinc</keyword>
<name>DNLJ_ECOSE</name>
<organism>
    <name type="scientific">Escherichia coli (strain SE11)</name>
    <dbReference type="NCBI Taxonomy" id="409438"/>
    <lineage>
        <taxon>Bacteria</taxon>
        <taxon>Pseudomonadati</taxon>
        <taxon>Pseudomonadota</taxon>
        <taxon>Gammaproteobacteria</taxon>
        <taxon>Enterobacterales</taxon>
        <taxon>Enterobacteriaceae</taxon>
        <taxon>Escherichia</taxon>
    </lineage>
</organism>
<evidence type="ECO:0000255" key="1">
    <source>
        <dbReference type="HAMAP-Rule" id="MF_01588"/>
    </source>
</evidence>
<protein>
    <recommendedName>
        <fullName evidence="1">DNA ligase</fullName>
        <ecNumber evidence="1">6.5.1.2</ecNumber>
    </recommendedName>
    <alternativeName>
        <fullName evidence="1">Polydeoxyribonucleotide synthase [NAD(+)]</fullName>
    </alternativeName>
</protein>
<dbReference type="EC" id="6.5.1.2" evidence="1"/>
<dbReference type="EMBL" id="AP009240">
    <property type="protein sequence ID" value="BAG78226.1"/>
    <property type="molecule type" value="Genomic_DNA"/>
</dbReference>
<dbReference type="RefSeq" id="WP_000443665.1">
    <property type="nucleotide sequence ID" value="NC_011415.1"/>
</dbReference>
<dbReference type="SMR" id="B6I4Y8"/>
<dbReference type="GeneID" id="75204318"/>
<dbReference type="KEGG" id="ecy:ECSE_2702"/>
<dbReference type="HOGENOM" id="CLU_007764_2_1_6"/>
<dbReference type="Proteomes" id="UP000008199">
    <property type="component" value="Chromosome"/>
</dbReference>
<dbReference type="GO" id="GO:0005829">
    <property type="term" value="C:cytosol"/>
    <property type="evidence" value="ECO:0007669"/>
    <property type="project" value="TreeGrafter"/>
</dbReference>
<dbReference type="GO" id="GO:0003677">
    <property type="term" value="F:DNA binding"/>
    <property type="evidence" value="ECO:0007669"/>
    <property type="project" value="InterPro"/>
</dbReference>
<dbReference type="GO" id="GO:0003911">
    <property type="term" value="F:DNA ligase (NAD+) activity"/>
    <property type="evidence" value="ECO:0007669"/>
    <property type="project" value="UniProtKB-UniRule"/>
</dbReference>
<dbReference type="GO" id="GO:0046872">
    <property type="term" value="F:metal ion binding"/>
    <property type="evidence" value="ECO:0007669"/>
    <property type="project" value="UniProtKB-KW"/>
</dbReference>
<dbReference type="GO" id="GO:0006281">
    <property type="term" value="P:DNA repair"/>
    <property type="evidence" value="ECO:0007669"/>
    <property type="project" value="UniProtKB-KW"/>
</dbReference>
<dbReference type="GO" id="GO:0006260">
    <property type="term" value="P:DNA replication"/>
    <property type="evidence" value="ECO:0007669"/>
    <property type="project" value="UniProtKB-KW"/>
</dbReference>
<dbReference type="CDD" id="cd17748">
    <property type="entry name" value="BRCT_DNA_ligase_like"/>
    <property type="match status" value="1"/>
</dbReference>
<dbReference type="CDD" id="cd00114">
    <property type="entry name" value="LIGANc"/>
    <property type="match status" value="1"/>
</dbReference>
<dbReference type="FunFam" id="1.10.150.20:FF:000006">
    <property type="entry name" value="DNA ligase"/>
    <property type="match status" value="1"/>
</dbReference>
<dbReference type="FunFam" id="1.10.150.20:FF:000007">
    <property type="entry name" value="DNA ligase"/>
    <property type="match status" value="1"/>
</dbReference>
<dbReference type="FunFam" id="1.10.287.610:FF:000002">
    <property type="entry name" value="DNA ligase"/>
    <property type="match status" value="1"/>
</dbReference>
<dbReference type="FunFam" id="2.40.50.140:FF:000012">
    <property type="entry name" value="DNA ligase"/>
    <property type="match status" value="1"/>
</dbReference>
<dbReference type="FunFam" id="3.30.470.30:FF:000001">
    <property type="entry name" value="DNA ligase"/>
    <property type="match status" value="1"/>
</dbReference>
<dbReference type="FunFam" id="3.40.50.10190:FF:000004">
    <property type="entry name" value="DNA ligase"/>
    <property type="match status" value="1"/>
</dbReference>
<dbReference type="FunFam" id="6.20.10.30:FF:000001">
    <property type="entry name" value="DNA ligase"/>
    <property type="match status" value="1"/>
</dbReference>
<dbReference type="Gene3D" id="6.20.10.30">
    <property type="match status" value="1"/>
</dbReference>
<dbReference type="Gene3D" id="1.10.150.20">
    <property type="entry name" value="5' to 3' exonuclease, C-terminal subdomain"/>
    <property type="match status" value="2"/>
</dbReference>
<dbReference type="Gene3D" id="3.40.50.10190">
    <property type="entry name" value="BRCT domain"/>
    <property type="match status" value="1"/>
</dbReference>
<dbReference type="Gene3D" id="3.30.470.30">
    <property type="entry name" value="DNA ligase/mRNA capping enzyme"/>
    <property type="match status" value="1"/>
</dbReference>
<dbReference type="Gene3D" id="1.10.287.610">
    <property type="entry name" value="Helix hairpin bin"/>
    <property type="match status" value="1"/>
</dbReference>
<dbReference type="Gene3D" id="2.40.50.140">
    <property type="entry name" value="Nucleic acid-binding proteins"/>
    <property type="match status" value="1"/>
</dbReference>
<dbReference type="HAMAP" id="MF_01588">
    <property type="entry name" value="DNA_ligase_A"/>
    <property type="match status" value="1"/>
</dbReference>
<dbReference type="InterPro" id="IPR001357">
    <property type="entry name" value="BRCT_dom"/>
</dbReference>
<dbReference type="InterPro" id="IPR036420">
    <property type="entry name" value="BRCT_dom_sf"/>
</dbReference>
<dbReference type="InterPro" id="IPR041663">
    <property type="entry name" value="DisA/LigA_HHH"/>
</dbReference>
<dbReference type="InterPro" id="IPR001679">
    <property type="entry name" value="DNA_ligase"/>
</dbReference>
<dbReference type="InterPro" id="IPR018239">
    <property type="entry name" value="DNA_ligase_AS"/>
</dbReference>
<dbReference type="InterPro" id="IPR033136">
    <property type="entry name" value="DNA_ligase_CS"/>
</dbReference>
<dbReference type="InterPro" id="IPR013839">
    <property type="entry name" value="DNAligase_adenylation"/>
</dbReference>
<dbReference type="InterPro" id="IPR013840">
    <property type="entry name" value="DNAligase_N"/>
</dbReference>
<dbReference type="InterPro" id="IPR003583">
    <property type="entry name" value="Hlx-hairpin-Hlx_DNA-bd_motif"/>
</dbReference>
<dbReference type="InterPro" id="IPR012340">
    <property type="entry name" value="NA-bd_OB-fold"/>
</dbReference>
<dbReference type="InterPro" id="IPR004150">
    <property type="entry name" value="NAD_DNA_ligase_OB"/>
</dbReference>
<dbReference type="InterPro" id="IPR010994">
    <property type="entry name" value="RuvA_2-like"/>
</dbReference>
<dbReference type="InterPro" id="IPR004149">
    <property type="entry name" value="Znf_DNAligase_C4"/>
</dbReference>
<dbReference type="NCBIfam" id="TIGR00575">
    <property type="entry name" value="dnlj"/>
    <property type="match status" value="1"/>
</dbReference>
<dbReference type="NCBIfam" id="NF005932">
    <property type="entry name" value="PRK07956.1"/>
    <property type="match status" value="1"/>
</dbReference>
<dbReference type="PANTHER" id="PTHR23389">
    <property type="entry name" value="CHROMOSOME TRANSMISSION FIDELITY FACTOR 18"/>
    <property type="match status" value="1"/>
</dbReference>
<dbReference type="PANTHER" id="PTHR23389:SF9">
    <property type="entry name" value="DNA LIGASE"/>
    <property type="match status" value="1"/>
</dbReference>
<dbReference type="Pfam" id="PF00533">
    <property type="entry name" value="BRCT"/>
    <property type="match status" value="1"/>
</dbReference>
<dbReference type="Pfam" id="PF01653">
    <property type="entry name" value="DNA_ligase_aden"/>
    <property type="match status" value="1"/>
</dbReference>
<dbReference type="Pfam" id="PF03120">
    <property type="entry name" value="DNA_ligase_OB"/>
    <property type="match status" value="1"/>
</dbReference>
<dbReference type="Pfam" id="PF03119">
    <property type="entry name" value="DNA_ligase_ZBD"/>
    <property type="match status" value="1"/>
</dbReference>
<dbReference type="Pfam" id="PF12826">
    <property type="entry name" value="HHH_2"/>
    <property type="match status" value="1"/>
</dbReference>
<dbReference type="Pfam" id="PF14520">
    <property type="entry name" value="HHH_5"/>
    <property type="match status" value="1"/>
</dbReference>
<dbReference type="Pfam" id="PF22745">
    <property type="entry name" value="Nlig-Ia"/>
    <property type="match status" value="1"/>
</dbReference>
<dbReference type="PIRSF" id="PIRSF001604">
    <property type="entry name" value="LigA"/>
    <property type="match status" value="1"/>
</dbReference>
<dbReference type="SMART" id="SM00292">
    <property type="entry name" value="BRCT"/>
    <property type="match status" value="1"/>
</dbReference>
<dbReference type="SMART" id="SM00278">
    <property type="entry name" value="HhH1"/>
    <property type="match status" value="4"/>
</dbReference>
<dbReference type="SMART" id="SM00532">
    <property type="entry name" value="LIGANc"/>
    <property type="match status" value="1"/>
</dbReference>
<dbReference type="SUPFAM" id="SSF52113">
    <property type="entry name" value="BRCT domain"/>
    <property type="match status" value="1"/>
</dbReference>
<dbReference type="SUPFAM" id="SSF56091">
    <property type="entry name" value="DNA ligase/mRNA capping enzyme, catalytic domain"/>
    <property type="match status" value="1"/>
</dbReference>
<dbReference type="SUPFAM" id="SSF50249">
    <property type="entry name" value="Nucleic acid-binding proteins"/>
    <property type="match status" value="1"/>
</dbReference>
<dbReference type="SUPFAM" id="SSF47781">
    <property type="entry name" value="RuvA domain 2-like"/>
    <property type="match status" value="1"/>
</dbReference>
<dbReference type="PROSITE" id="PS50172">
    <property type="entry name" value="BRCT"/>
    <property type="match status" value="1"/>
</dbReference>
<dbReference type="PROSITE" id="PS01055">
    <property type="entry name" value="DNA_LIGASE_N1"/>
    <property type="match status" value="1"/>
</dbReference>
<dbReference type="PROSITE" id="PS01056">
    <property type="entry name" value="DNA_LIGASE_N2"/>
    <property type="match status" value="1"/>
</dbReference>
<proteinExistence type="inferred from homology"/>
<reference key="1">
    <citation type="journal article" date="2008" name="DNA Res.">
        <title>Complete genome sequence and comparative analysis of the wild-type commensal Escherichia coli strain SE11 isolated from a healthy adult.</title>
        <authorList>
            <person name="Oshima K."/>
            <person name="Toh H."/>
            <person name="Ogura Y."/>
            <person name="Sasamoto H."/>
            <person name="Morita H."/>
            <person name="Park S.-H."/>
            <person name="Ooka T."/>
            <person name="Iyoda S."/>
            <person name="Taylor T.D."/>
            <person name="Hayashi T."/>
            <person name="Itoh K."/>
            <person name="Hattori M."/>
        </authorList>
    </citation>
    <scope>NUCLEOTIDE SEQUENCE [LARGE SCALE GENOMIC DNA]</scope>
    <source>
        <strain>SE11</strain>
    </source>
</reference>
<feature type="chain" id="PRO_0000380378" description="DNA ligase">
    <location>
        <begin position="1"/>
        <end position="671"/>
    </location>
</feature>
<feature type="domain" description="BRCT" evidence="1">
    <location>
        <begin position="593"/>
        <end position="671"/>
    </location>
</feature>
<feature type="active site" description="N6-AMP-lysine intermediate" evidence="1">
    <location>
        <position position="115"/>
    </location>
</feature>
<feature type="binding site" evidence="1">
    <location>
        <begin position="32"/>
        <end position="36"/>
    </location>
    <ligand>
        <name>NAD(+)</name>
        <dbReference type="ChEBI" id="CHEBI:57540"/>
    </ligand>
</feature>
<feature type="binding site" evidence="1">
    <location>
        <begin position="81"/>
        <end position="82"/>
    </location>
    <ligand>
        <name>NAD(+)</name>
        <dbReference type="ChEBI" id="CHEBI:57540"/>
    </ligand>
</feature>
<feature type="binding site" evidence="1">
    <location>
        <position position="113"/>
    </location>
    <ligand>
        <name>NAD(+)</name>
        <dbReference type="ChEBI" id="CHEBI:57540"/>
    </ligand>
</feature>
<feature type="binding site" evidence="1">
    <location>
        <position position="136"/>
    </location>
    <ligand>
        <name>NAD(+)</name>
        <dbReference type="ChEBI" id="CHEBI:57540"/>
    </ligand>
</feature>
<feature type="binding site" evidence="1">
    <location>
        <position position="173"/>
    </location>
    <ligand>
        <name>NAD(+)</name>
        <dbReference type="ChEBI" id="CHEBI:57540"/>
    </ligand>
</feature>
<feature type="binding site" evidence="1">
    <location>
        <position position="290"/>
    </location>
    <ligand>
        <name>NAD(+)</name>
        <dbReference type="ChEBI" id="CHEBI:57540"/>
    </ligand>
</feature>
<feature type="binding site" evidence="1">
    <location>
        <position position="314"/>
    </location>
    <ligand>
        <name>NAD(+)</name>
        <dbReference type="ChEBI" id="CHEBI:57540"/>
    </ligand>
</feature>
<feature type="binding site" evidence="1">
    <location>
        <position position="408"/>
    </location>
    <ligand>
        <name>Zn(2+)</name>
        <dbReference type="ChEBI" id="CHEBI:29105"/>
    </ligand>
</feature>
<feature type="binding site" evidence="1">
    <location>
        <position position="411"/>
    </location>
    <ligand>
        <name>Zn(2+)</name>
        <dbReference type="ChEBI" id="CHEBI:29105"/>
    </ligand>
</feature>
<feature type="binding site" evidence="1">
    <location>
        <position position="426"/>
    </location>
    <ligand>
        <name>Zn(2+)</name>
        <dbReference type="ChEBI" id="CHEBI:29105"/>
    </ligand>
</feature>
<feature type="binding site" evidence="1">
    <location>
        <position position="432"/>
    </location>
    <ligand>
        <name>Zn(2+)</name>
        <dbReference type="ChEBI" id="CHEBI:29105"/>
    </ligand>
</feature>
<accession>B6I4Y8</accession>
<comment type="function">
    <text evidence="1">DNA ligase that catalyzes the formation of phosphodiester linkages between 5'-phosphoryl and 3'-hydroxyl groups in double-stranded DNA using NAD as a coenzyme and as the energy source for the reaction. It is essential for DNA replication and repair of damaged DNA.</text>
</comment>
<comment type="catalytic activity">
    <reaction evidence="1">
        <text>NAD(+) + (deoxyribonucleotide)n-3'-hydroxyl + 5'-phospho-(deoxyribonucleotide)m = (deoxyribonucleotide)n+m + AMP + beta-nicotinamide D-nucleotide.</text>
        <dbReference type="EC" id="6.5.1.2"/>
    </reaction>
</comment>
<comment type="cofactor">
    <cofactor evidence="1">
        <name>Mg(2+)</name>
        <dbReference type="ChEBI" id="CHEBI:18420"/>
    </cofactor>
    <cofactor evidence="1">
        <name>Mn(2+)</name>
        <dbReference type="ChEBI" id="CHEBI:29035"/>
    </cofactor>
</comment>
<comment type="similarity">
    <text evidence="1">Belongs to the NAD-dependent DNA ligase family. LigA subfamily.</text>
</comment>